<gene>
    <name evidence="1" type="primary">ndk</name>
    <name type="ordered locus">Cla_1334</name>
</gene>
<feature type="chain" id="PRO_1000135243" description="Nucleoside diphosphate kinase">
    <location>
        <begin position="1"/>
        <end position="137"/>
    </location>
</feature>
<feature type="active site" description="Pros-phosphohistidine intermediate" evidence="1">
    <location>
        <position position="115"/>
    </location>
</feature>
<feature type="binding site" evidence="1">
    <location>
        <position position="9"/>
    </location>
    <ligand>
        <name>ATP</name>
        <dbReference type="ChEBI" id="CHEBI:30616"/>
    </ligand>
</feature>
<feature type="binding site" evidence="1">
    <location>
        <position position="57"/>
    </location>
    <ligand>
        <name>ATP</name>
        <dbReference type="ChEBI" id="CHEBI:30616"/>
    </ligand>
</feature>
<feature type="binding site" evidence="1">
    <location>
        <position position="85"/>
    </location>
    <ligand>
        <name>ATP</name>
        <dbReference type="ChEBI" id="CHEBI:30616"/>
    </ligand>
</feature>
<feature type="binding site" evidence="1">
    <location>
        <position position="91"/>
    </location>
    <ligand>
        <name>ATP</name>
        <dbReference type="ChEBI" id="CHEBI:30616"/>
    </ligand>
</feature>
<feature type="binding site" evidence="1">
    <location>
        <position position="102"/>
    </location>
    <ligand>
        <name>ATP</name>
        <dbReference type="ChEBI" id="CHEBI:30616"/>
    </ligand>
</feature>
<feature type="binding site" evidence="1">
    <location>
        <position position="112"/>
    </location>
    <ligand>
        <name>ATP</name>
        <dbReference type="ChEBI" id="CHEBI:30616"/>
    </ligand>
</feature>
<proteinExistence type="inferred from homology"/>
<protein>
    <recommendedName>
        <fullName evidence="1">Nucleoside diphosphate kinase</fullName>
        <shortName evidence="1">NDK</shortName>
        <shortName evidence="1">NDP kinase</shortName>
        <ecNumber evidence="1">2.7.4.6</ecNumber>
    </recommendedName>
    <alternativeName>
        <fullName evidence="1">Nucleoside-2-P kinase</fullName>
    </alternativeName>
</protein>
<reference key="1">
    <citation type="journal article" date="2008" name="Foodborne Pathog. Dis.">
        <title>The complete genome sequence and analysis of the human pathogen Campylobacter lari.</title>
        <authorList>
            <person name="Miller W.G."/>
            <person name="Wang G."/>
            <person name="Binnewies T.T."/>
            <person name="Parker C.T."/>
        </authorList>
    </citation>
    <scope>NUCLEOTIDE SEQUENCE [LARGE SCALE GENOMIC DNA]</scope>
    <source>
        <strain>RM2100 / D67 / ATCC BAA-1060</strain>
    </source>
</reference>
<evidence type="ECO:0000255" key="1">
    <source>
        <dbReference type="HAMAP-Rule" id="MF_00451"/>
    </source>
</evidence>
<organism>
    <name type="scientific">Campylobacter lari (strain RM2100 / D67 / ATCC BAA-1060)</name>
    <dbReference type="NCBI Taxonomy" id="306263"/>
    <lineage>
        <taxon>Bacteria</taxon>
        <taxon>Pseudomonadati</taxon>
        <taxon>Campylobacterota</taxon>
        <taxon>Epsilonproteobacteria</taxon>
        <taxon>Campylobacterales</taxon>
        <taxon>Campylobacteraceae</taxon>
        <taxon>Campylobacter</taxon>
    </lineage>
</organism>
<sequence>MEKTLSIIKPDAVKKGVIGQILTRFESNGLRIAATKKIQLSEKEAQEFYAVHKDRPFFKDLVEFMISGPVVVSVLEGKNAVLKNRELMGATNPKEAAAGTIRADFADSIDANAVHGSDSLENAKIEIEFFFSKTEIL</sequence>
<keyword id="KW-0067">ATP-binding</keyword>
<keyword id="KW-0963">Cytoplasm</keyword>
<keyword id="KW-0418">Kinase</keyword>
<keyword id="KW-0460">Magnesium</keyword>
<keyword id="KW-0479">Metal-binding</keyword>
<keyword id="KW-0546">Nucleotide metabolism</keyword>
<keyword id="KW-0547">Nucleotide-binding</keyword>
<keyword id="KW-0597">Phosphoprotein</keyword>
<keyword id="KW-1185">Reference proteome</keyword>
<keyword id="KW-0808">Transferase</keyword>
<comment type="function">
    <text evidence="1">Major role in the synthesis of nucleoside triphosphates other than ATP. The ATP gamma phosphate is transferred to the NDP beta phosphate via a ping-pong mechanism, using a phosphorylated active-site intermediate.</text>
</comment>
<comment type="catalytic activity">
    <reaction evidence="1">
        <text>a 2'-deoxyribonucleoside 5'-diphosphate + ATP = a 2'-deoxyribonucleoside 5'-triphosphate + ADP</text>
        <dbReference type="Rhea" id="RHEA:44640"/>
        <dbReference type="ChEBI" id="CHEBI:30616"/>
        <dbReference type="ChEBI" id="CHEBI:61560"/>
        <dbReference type="ChEBI" id="CHEBI:73316"/>
        <dbReference type="ChEBI" id="CHEBI:456216"/>
        <dbReference type="EC" id="2.7.4.6"/>
    </reaction>
</comment>
<comment type="catalytic activity">
    <reaction evidence="1">
        <text>a ribonucleoside 5'-diphosphate + ATP = a ribonucleoside 5'-triphosphate + ADP</text>
        <dbReference type="Rhea" id="RHEA:18113"/>
        <dbReference type="ChEBI" id="CHEBI:30616"/>
        <dbReference type="ChEBI" id="CHEBI:57930"/>
        <dbReference type="ChEBI" id="CHEBI:61557"/>
        <dbReference type="ChEBI" id="CHEBI:456216"/>
        <dbReference type="EC" id="2.7.4.6"/>
    </reaction>
</comment>
<comment type="cofactor">
    <cofactor evidence="1">
        <name>Mg(2+)</name>
        <dbReference type="ChEBI" id="CHEBI:18420"/>
    </cofactor>
</comment>
<comment type="subunit">
    <text evidence="1">Homotetramer.</text>
</comment>
<comment type="subcellular location">
    <subcellularLocation>
        <location evidence="1">Cytoplasm</location>
    </subcellularLocation>
</comment>
<comment type="similarity">
    <text evidence="1">Belongs to the NDK family.</text>
</comment>
<name>NDK_CAMLR</name>
<dbReference type="EC" id="2.7.4.6" evidence="1"/>
<dbReference type="EMBL" id="CP000932">
    <property type="protein sequence ID" value="ACM64649.1"/>
    <property type="molecule type" value="Genomic_DNA"/>
</dbReference>
<dbReference type="RefSeq" id="WP_012662032.1">
    <property type="nucleotide sequence ID" value="NC_012039.1"/>
</dbReference>
<dbReference type="RefSeq" id="WP_012662033.1">
    <property type="nucleotide sequence ID" value="NC_012039.1"/>
</dbReference>
<dbReference type="SMR" id="B9KDL1"/>
<dbReference type="STRING" id="306263.Cla_1334"/>
<dbReference type="KEGG" id="cla:CLA_1334"/>
<dbReference type="PATRIC" id="fig|306263.5.peg.1320"/>
<dbReference type="eggNOG" id="COG0105">
    <property type="taxonomic scope" value="Bacteria"/>
</dbReference>
<dbReference type="HOGENOM" id="CLU_060216_8_1_7"/>
<dbReference type="Proteomes" id="UP000007727">
    <property type="component" value="Chromosome"/>
</dbReference>
<dbReference type="GO" id="GO:0005737">
    <property type="term" value="C:cytoplasm"/>
    <property type="evidence" value="ECO:0007669"/>
    <property type="project" value="UniProtKB-SubCell"/>
</dbReference>
<dbReference type="GO" id="GO:0005524">
    <property type="term" value="F:ATP binding"/>
    <property type="evidence" value="ECO:0007669"/>
    <property type="project" value="UniProtKB-UniRule"/>
</dbReference>
<dbReference type="GO" id="GO:0046872">
    <property type="term" value="F:metal ion binding"/>
    <property type="evidence" value="ECO:0007669"/>
    <property type="project" value="UniProtKB-KW"/>
</dbReference>
<dbReference type="GO" id="GO:0004550">
    <property type="term" value="F:nucleoside diphosphate kinase activity"/>
    <property type="evidence" value="ECO:0007669"/>
    <property type="project" value="UniProtKB-UniRule"/>
</dbReference>
<dbReference type="GO" id="GO:0006241">
    <property type="term" value="P:CTP biosynthetic process"/>
    <property type="evidence" value="ECO:0007669"/>
    <property type="project" value="UniProtKB-UniRule"/>
</dbReference>
<dbReference type="GO" id="GO:0006183">
    <property type="term" value="P:GTP biosynthetic process"/>
    <property type="evidence" value="ECO:0007669"/>
    <property type="project" value="UniProtKB-UniRule"/>
</dbReference>
<dbReference type="GO" id="GO:0006228">
    <property type="term" value="P:UTP biosynthetic process"/>
    <property type="evidence" value="ECO:0007669"/>
    <property type="project" value="UniProtKB-UniRule"/>
</dbReference>
<dbReference type="CDD" id="cd04413">
    <property type="entry name" value="NDPk_I"/>
    <property type="match status" value="1"/>
</dbReference>
<dbReference type="FunFam" id="3.30.70.141:FF:000001">
    <property type="entry name" value="Nucleoside diphosphate kinase"/>
    <property type="match status" value="1"/>
</dbReference>
<dbReference type="Gene3D" id="3.30.70.141">
    <property type="entry name" value="Nucleoside diphosphate kinase-like domain"/>
    <property type="match status" value="1"/>
</dbReference>
<dbReference type="HAMAP" id="MF_00451">
    <property type="entry name" value="NDP_kinase"/>
    <property type="match status" value="1"/>
</dbReference>
<dbReference type="InterPro" id="IPR034907">
    <property type="entry name" value="NDK-like_dom"/>
</dbReference>
<dbReference type="InterPro" id="IPR036850">
    <property type="entry name" value="NDK-like_dom_sf"/>
</dbReference>
<dbReference type="InterPro" id="IPR001564">
    <property type="entry name" value="Nucleoside_diP_kinase"/>
</dbReference>
<dbReference type="InterPro" id="IPR023005">
    <property type="entry name" value="Nucleoside_diP_kinase_AS"/>
</dbReference>
<dbReference type="NCBIfam" id="NF001908">
    <property type="entry name" value="PRK00668.1"/>
    <property type="match status" value="1"/>
</dbReference>
<dbReference type="PANTHER" id="PTHR11349">
    <property type="entry name" value="NUCLEOSIDE DIPHOSPHATE KINASE"/>
    <property type="match status" value="1"/>
</dbReference>
<dbReference type="Pfam" id="PF00334">
    <property type="entry name" value="NDK"/>
    <property type="match status" value="1"/>
</dbReference>
<dbReference type="PRINTS" id="PR01243">
    <property type="entry name" value="NUCDPKINASE"/>
</dbReference>
<dbReference type="SMART" id="SM00562">
    <property type="entry name" value="NDK"/>
    <property type="match status" value="1"/>
</dbReference>
<dbReference type="SUPFAM" id="SSF54919">
    <property type="entry name" value="Nucleoside diphosphate kinase, NDK"/>
    <property type="match status" value="1"/>
</dbReference>
<dbReference type="PROSITE" id="PS00469">
    <property type="entry name" value="NDPK"/>
    <property type="match status" value="1"/>
</dbReference>
<dbReference type="PROSITE" id="PS51374">
    <property type="entry name" value="NDPK_LIKE"/>
    <property type="match status" value="1"/>
</dbReference>
<accession>B9KDL1</accession>